<keyword id="KW-0186">Copper</keyword>
<keyword id="KW-0249">Electron transport</keyword>
<keyword id="KW-0460">Magnesium</keyword>
<keyword id="KW-0472">Membrane</keyword>
<keyword id="KW-0479">Metal-binding</keyword>
<keyword id="KW-0496">Mitochondrion</keyword>
<keyword id="KW-0999">Mitochondrion inner membrane</keyword>
<keyword id="KW-0679">Respiratory chain</keyword>
<keyword id="KW-1278">Translocase</keyword>
<keyword id="KW-0812">Transmembrane</keyword>
<keyword id="KW-1133">Transmembrane helix</keyword>
<keyword id="KW-0813">Transport</keyword>
<name>COX2_RHIUN</name>
<proteinExistence type="inferred from homology"/>
<comment type="function">
    <text evidence="2">Component of the cytochrome c oxidase, the last enzyme in the mitochondrial electron transport chain which drives oxidative phosphorylation. The respiratory chain contains 3 multisubunit complexes succinate dehydrogenase (complex II, CII), ubiquinol-cytochrome c oxidoreductase (cytochrome b-c1 complex, complex III, CIII) and cytochrome c oxidase (complex IV, CIV), that cooperate to transfer electrons derived from NADH and succinate to molecular oxygen, creating an electrochemical gradient over the inner membrane that drives transmembrane transport and the ATP synthase. Cytochrome c oxidase is the component of the respiratory chain that catalyzes the reduction of oxygen to water. Electrons originating from reduced cytochrome c in the intermembrane space (IMS) are transferred via the dinuclear copper A center (CU(A)) of subunit 2 and heme A of subunit 1 to the active site in subunit 1, a binuclear center (BNC) formed by heme A3 and copper B (CU(B)). The BNC reduces molecular oxygen to 2 water molecules using 4 electrons from cytochrome c in the IMS and 4 protons from the mitochondrial matrix.</text>
</comment>
<comment type="catalytic activity">
    <reaction evidence="2">
        <text>4 Fe(II)-[cytochrome c] + O2 + 8 H(+)(in) = 4 Fe(III)-[cytochrome c] + 2 H2O + 4 H(+)(out)</text>
        <dbReference type="Rhea" id="RHEA:11436"/>
        <dbReference type="Rhea" id="RHEA-COMP:10350"/>
        <dbReference type="Rhea" id="RHEA-COMP:14399"/>
        <dbReference type="ChEBI" id="CHEBI:15377"/>
        <dbReference type="ChEBI" id="CHEBI:15378"/>
        <dbReference type="ChEBI" id="CHEBI:15379"/>
        <dbReference type="ChEBI" id="CHEBI:29033"/>
        <dbReference type="ChEBI" id="CHEBI:29034"/>
        <dbReference type="EC" id="7.1.1.9"/>
    </reaction>
    <physiologicalReaction direction="left-to-right" evidence="2">
        <dbReference type="Rhea" id="RHEA:11437"/>
    </physiologicalReaction>
</comment>
<comment type="cofactor">
    <cofactor evidence="3">
        <name>Cu cation</name>
        <dbReference type="ChEBI" id="CHEBI:23378"/>
    </cofactor>
    <text evidence="3">Binds a dinuclear copper A center per subunit.</text>
</comment>
<comment type="subunit">
    <text evidence="1 3">Component of the cytochrome c oxidase (complex IV, CIV), a multisubunit enzyme composed of 14 subunits. The complex is composed of a catalytic core of 3 subunits MT-CO1, MT-CO2 and MT-CO3, encoded in the mitochondrial DNA, and 11 supernumerary subunits COX4I, COX5A, COX5B, COX6A, COX6B, COX6C, COX7A, COX7B, COX7C, COX8 and NDUFA4, which are encoded in the nuclear genome. The complex exists as a monomer or a dimer and forms supercomplexes (SCs) in the inner mitochondrial membrane with NADH-ubiquinone oxidoreductase (complex I, CI) and ubiquinol-cytochrome c oxidoreductase (cytochrome b-c1 complex, complex III, CIII), resulting in different assemblies (supercomplex SCI(1)III(2)IV(1) and megacomplex MCI(2)III(2)IV(2)) (By similarity). Found in a complex with TMEM177, COA6, COX18, COX20, SCO1 and SCO2. Interacts with TMEM177 in a COX20-dependent manner. Interacts with COX20. Interacts with COX16 (By similarity).</text>
</comment>
<comment type="subcellular location">
    <subcellularLocation>
        <location evidence="3">Mitochondrion inner membrane</location>
        <topology evidence="3">Multi-pass membrane protein</topology>
    </subcellularLocation>
</comment>
<comment type="similarity">
    <text evidence="4">Belongs to the cytochrome c oxidase subunit 2 family.</text>
</comment>
<organism>
    <name type="scientific">Rhinoceros unicornis</name>
    <name type="common">Greater Indian rhinoceros</name>
    <dbReference type="NCBI Taxonomy" id="9809"/>
    <lineage>
        <taxon>Eukaryota</taxon>
        <taxon>Metazoa</taxon>
        <taxon>Chordata</taxon>
        <taxon>Craniata</taxon>
        <taxon>Vertebrata</taxon>
        <taxon>Euteleostomi</taxon>
        <taxon>Mammalia</taxon>
        <taxon>Eutheria</taxon>
        <taxon>Laurasiatheria</taxon>
        <taxon>Perissodactyla</taxon>
        <taxon>Rhinocerotidae</taxon>
        <taxon>Rhinoceros</taxon>
    </lineage>
</organism>
<feature type="chain" id="PRO_0000183681" description="Cytochrome c oxidase subunit 2">
    <location>
        <begin position="1"/>
        <end position="227"/>
    </location>
</feature>
<feature type="topological domain" description="Mitochondrial intermembrane" evidence="3">
    <location>
        <begin position="1"/>
        <end position="14"/>
    </location>
</feature>
<feature type="transmembrane region" description="Helical; Name=I" evidence="3">
    <location>
        <begin position="15"/>
        <end position="45"/>
    </location>
</feature>
<feature type="topological domain" description="Mitochondrial matrix" evidence="3">
    <location>
        <begin position="46"/>
        <end position="59"/>
    </location>
</feature>
<feature type="transmembrane region" description="Helical; Name=II" evidence="3">
    <location>
        <begin position="60"/>
        <end position="87"/>
    </location>
</feature>
<feature type="topological domain" description="Mitochondrial intermembrane" evidence="3">
    <location>
        <begin position="88"/>
        <end position="227"/>
    </location>
</feature>
<feature type="binding site" evidence="3">
    <location>
        <position position="161"/>
    </location>
    <ligand>
        <name>Cu cation</name>
        <dbReference type="ChEBI" id="CHEBI:23378"/>
        <label>A1</label>
    </ligand>
</feature>
<feature type="binding site" evidence="3">
    <location>
        <position position="196"/>
    </location>
    <ligand>
        <name>Cu cation</name>
        <dbReference type="ChEBI" id="CHEBI:23378"/>
        <label>A1</label>
    </ligand>
</feature>
<feature type="binding site" evidence="3">
    <location>
        <position position="196"/>
    </location>
    <ligand>
        <name>Cu cation</name>
        <dbReference type="ChEBI" id="CHEBI:23378"/>
        <label>A2</label>
    </ligand>
</feature>
<feature type="binding site" evidence="3">
    <location>
        <position position="198"/>
    </location>
    <ligand>
        <name>Cu cation</name>
        <dbReference type="ChEBI" id="CHEBI:23378"/>
        <label>A2</label>
    </ligand>
</feature>
<feature type="binding site" evidence="3">
    <location>
        <position position="198"/>
    </location>
    <ligand>
        <name>Mg(2+)</name>
        <dbReference type="ChEBI" id="CHEBI:18420"/>
        <note>ligand shared with MT-CO1</note>
    </ligand>
</feature>
<feature type="binding site" evidence="3">
    <location>
        <position position="200"/>
    </location>
    <ligand>
        <name>Cu cation</name>
        <dbReference type="ChEBI" id="CHEBI:23378"/>
        <label>A1</label>
    </ligand>
</feature>
<feature type="binding site" evidence="3">
    <location>
        <position position="200"/>
    </location>
    <ligand>
        <name>Cu cation</name>
        <dbReference type="ChEBI" id="CHEBI:23378"/>
        <label>A2</label>
    </ligand>
</feature>
<feature type="binding site" evidence="3">
    <location>
        <position position="204"/>
    </location>
    <ligand>
        <name>Cu cation</name>
        <dbReference type="ChEBI" id="CHEBI:23378"/>
        <label>A2</label>
    </ligand>
</feature>
<feature type="binding site" evidence="3">
    <location>
        <position position="207"/>
    </location>
    <ligand>
        <name>Cu cation</name>
        <dbReference type="ChEBI" id="CHEBI:23378"/>
        <label>A1</label>
    </ligand>
</feature>
<accession>Q96190</accession>
<sequence>MAYPLQLGFQDATSPIMEELLHFHDHTLMIVFLISSLVLYIISLMLTTKLTHTSTMDAQEVETIWTILPAIILILIALPSLRILYMMDEINNPSLTIKTMGHQWYWSYEYTDYEDLTFDSYMIPTSDLKPGELRLLEVDNRVVLPMEMTIRMLISSEDVLHSWAVPSLGLKTDAIPGRLNQTTLISTRPGLYYGQCSEICGSNHSFMPIVLELVPLKHFEKWSTSML</sequence>
<dbReference type="EC" id="7.1.1.9"/>
<dbReference type="EMBL" id="X97336">
    <property type="protein sequence ID" value="CAA66004.1"/>
    <property type="molecule type" value="Genomic_DNA"/>
</dbReference>
<dbReference type="PIR" id="T11250">
    <property type="entry name" value="T11250"/>
</dbReference>
<dbReference type="RefSeq" id="NP_007371.1">
    <property type="nucleotide sequence ID" value="NC_001779.1"/>
</dbReference>
<dbReference type="SMR" id="Q96190"/>
<dbReference type="GeneID" id="808043"/>
<dbReference type="CTD" id="4513"/>
<dbReference type="GO" id="GO:0005743">
    <property type="term" value="C:mitochondrial inner membrane"/>
    <property type="evidence" value="ECO:0007669"/>
    <property type="project" value="UniProtKB-SubCell"/>
</dbReference>
<dbReference type="GO" id="GO:0045277">
    <property type="term" value="C:respiratory chain complex IV"/>
    <property type="evidence" value="ECO:0000250"/>
    <property type="project" value="UniProtKB"/>
</dbReference>
<dbReference type="GO" id="GO:0005507">
    <property type="term" value="F:copper ion binding"/>
    <property type="evidence" value="ECO:0007669"/>
    <property type="project" value="InterPro"/>
</dbReference>
<dbReference type="GO" id="GO:0004129">
    <property type="term" value="F:cytochrome-c oxidase activity"/>
    <property type="evidence" value="ECO:0007669"/>
    <property type="project" value="UniProtKB-EC"/>
</dbReference>
<dbReference type="GO" id="GO:0042773">
    <property type="term" value="P:ATP synthesis coupled electron transport"/>
    <property type="evidence" value="ECO:0007669"/>
    <property type="project" value="TreeGrafter"/>
</dbReference>
<dbReference type="CDD" id="cd13912">
    <property type="entry name" value="CcO_II_C"/>
    <property type="match status" value="1"/>
</dbReference>
<dbReference type="FunFam" id="1.10.287.90:FF:000001">
    <property type="entry name" value="Cytochrome c oxidase subunit 2"/>
    <property type="match status" value="1"/>
</dbReference>
<dbReference type="FunFam" id="2.60.40.420:FF:000001">
    <property type="entry name" value="Cytochrome c oxidase subunit 2"/>
    <property type="match status" value="1"/>
</dbReference>
<dbReference type="Gene3D" id="1.10.287.90">
    <property type="match status" value="1"/>
</dbReference>
<dbReference type="Gene3D" id="2.60.40.420">
    <property type="entry name" value="Cupredoxins - blue copper proteins"/>
    <property type="match status" value="1"/>
</dbReference>
<dbReference type="InterPro" id="IPR045187">
    <property type="entry name" value="CcO_II"/>
</dbReference>
<dbReference type="InterPro" id="IPR002429">
    <property type="entry name" value="CcO_II-like_C"/>
</dbReference>
<dbReference type="InterPro" id="IPR034210">
    <property type="entry name" value="CcO_II_C"/>
</dbReference>
<dbReference type="InterPro" id="IPR001505">
    <property type="entry name" value="Copper_CuA"/>
</dbReference>
<dbReference type="InterPro" id="IPR008972">
    <property type="entry name" value="Cupredoxin"/>
</dbReference>
<dbReference type="InterPro" id="IPR014222">
    <property type="entry name" value="Cyt_c_oxidase_su2"/>
</dbReference>
<dbReference type="InterPro" id="IPR011759">
    <property type="entry name" value="Cyt_c_oxidase_su2_TM_dom"/>
</dbReference>
<dbReference type="InterPro" id="IPR036257">
    <property type="entry name" value="Cyt_c_oxidase_su2_TM_sf"/>
</dbReference>
<dbReference type="NCBIfam" id="TIGR02866">
    <property type="entry name" value="CoxB"/>
    <property type="match status" value="1"/>
</dbReference>
<dbReference type="PANTHER" id="PTHR22888:SF9">
    <property type="entry name" value="CYTOCHROME C OXIDASE SUBUNIT 2"/>
    <property type="match status" value="1"/>
</dbReference>
<dbReference type="PANTHER" id="PTHR22888">
    <property type="entry name" value="CYTOCHROME C OXIDASE, SUBUNIT II"/>
    <property type="match status" value="1"/>
</dbReference>
<dbReference type="Pfam" id="PF00116">
    <property type="entry name" value="COX2"/>
    <property type="match status" value="1"/>
</dbReference>
<dbReference type="Pfam" id="PF02790">
    <property type="entry name" value="COX2_TM"/>
    <property type="match status" value="1"/>
</dbReference>
<dbReference type="PRINTS" id="PR01166">
    <property type="entry name" value="CYCOXIDASEII"/>
</dbReference>
<dbReference type="SUPFAM" id="SSF49503">
    <property type="entry name" value="Cupredoxins"/>
    <property type="match status" value="1"/>
</dbReference>
<dbReference type="SUPFAM" id="SSF81464">
    <property type="entry name" value="Cytochrome c oxidase subunit II-like, transmembrane region"/>
    <property type="match status" value="1"/>
</dbReference>
<dbReference type="PROSITE" id="PS00078">
    <property type="entry name" value="COX2"/>
    <property type="match status" value="1"/>
</dbReference>
<dbReference type="PROSITE" id="PS50857">
    <property type="entry name" value="COX2_CUA"/>
    <property type="match status" value="1"/>
</dbReference>
<dbReference type="PROSITE" id="PS50999">
    <property type="entry name" value="COX2_TM"/>
    <property type="match status" value="1"/>
</dbReference>
<reference key="1">
    <citation type="journal article" date="1996" name="Mol. Biol. Evol.">
        <title>The complete mitochondrial DNA sequence of the greater Indian rhinoceros, Rhinoceros unicornis, and the Phylogenetic relationship among Carnivora, Perissodactyla, and Artiodactyla (+ Cetacea).</title>
        <authorList>
            <person name="Xu X."/>
            <person name="Janke A."/>
            <person name="Arnason U."/>
        </authorList>
    </citation>
    <scope>NUCLEOTIDE SEQUENCE [GENOMIC DNA]</scope>
    <source>
        <tissue>Kidney</tissue>
    </source>
</reference>
<gene>
    <name type="primary">MT-CO2</name>
    <name type="synonym">COII</name>
    <name type="synonym">COX2</name>
    <name type="synonym">COXII</name>
    <name type="synonym">MTCO2</name>
</gene>
<protein>
    <recommendedName>
        <fullName>Cytochrome c oxidase subunit 2</fullName>
        <ecNumber>7.1.1.9</ecNumber>
    </recommendedName>
    <alternativeName>
        <fullName>Cytochrome c oxidase polypeptide II</fullName>
    </alternativeName>
</protein>
<evidence type="ECO:0000250" key="1">
    <source>
        <dbReference type="UniProtKB" id="P00403"/>
    </source>
</evidence>
<evidence type="ECO:0000250" key="2">
    <source>
        <dbReference type="UniProtKB" id="P00410"/>
    </source>
</evidence>
<evidence type="ECO:0000250" key="3">
    <source>
        <dbReference type="UniProtKB" id="P68530"/>
    </source>
</evidence>
<evidence type="ECO:0000305" key="4"/>
<geneLocation type="mitochondrion"/>